<name>HGD_PSEPF</name>
<keyword id="KW-0223">Dioxygenase</keyword>
<keyword id="KW-0408">Iron</keyword>
<keyword id="KW-0479">Metal-binding</keyword>
<keyword id="KW-0560">Oxidoreductase</keyword>
<keyword id="KW-0585">Phenylalanine catabolism</keyword>
<keyword id="KW-0828">Tyrosine catabolism</keyword>
<dbReference type="EC" id="1.13.11.5" evidence="1"/>
<dbReference type="EMBL" id="CP000094">
    <property type="protein sequence ID" value="ABA72653.1"/>
    <property type="molecule type" value="Genomic_DNA"/>
</dbReference>
<dbReference type="RefSeq" id="WP_011332514.1">
    <property type="nucleotide sequence ID" value="NC_007492.2"/>
</dbReference>
<dbReference type="SMR" id="Q3KHV3"/>
<dbReference type="KEGG" id="pfo:Pfl01_0910"/>
<dbReference type="eggNOG" id="COG3508">
    <property type="taxonomic scope" value="Bacteria"/>
</dbReference>
<dbReference type="HOGENOM" id="CLU_027174_0_0_6"/>
<dbReference type="UniPathway" id="UPA00139">
    <property type="reaction ID" value="UER00339"/>
</dbReference>
<dbReference type="Proteomes" id="UP000002704">
    <property type="component" value="Chromosome"/>
</dbReference>
<dbReference type="GO" id="GO:0005737">
    <property type="term" value="C:cytoplasm"/>
    <property type="evidence" value="ECO:0007669"/>
    <property type="project" value="TreeGrafter"/>
</dbReference>
<dbReference type="GO" id="GO:0004411">
    <property type="term" value="F:homogentisate 1,2-dioxygenase activity"/>
    <property type="evidence" value="ECO:0007669"/>
    <property type="project" value="UniProtKB-UniRule"/>
</dbReference>
<dbReference type="GO" id="GO:0005506">
    <property type="term" value="F:iron ion binding"/>
    <property type="evidence" value="ECO:0007669"/>
    <property type="project" value="UniProtKB-UniRule"/>
</dbReference>
<dbReference type="GO" id="GO:0006559">
    <property type="term" value="P:L-phenylalanine catabolic process"/>
    <property type="evidence" value="ECO:0007669"/>
    <property type="project" value="UniProtKB-UniRule"/>
</dbReference>
<dbReference type="GO" id="GO:0006572">
    <property type="term" value="P:tyrosine catabolic process"/>
    <property type="evidence" value="ECO:0007669"/>
    <property type="project" value="UniProtKB-UniRule"/>
</dbReference>
<dbReference type="CDD" id="cd07000">
    <property type="entry name" value="cupin_HGO_N"/>
    <property type="match status" value="1"/>
</dbReference>
<dbReference type="FunFam" id="2.60.120.10:FF:000036">
    <property type="entry name" value="Homogentisate 1,2-dioxygenase"/>
    <property type="match status" value="1"/>
</dbReference>
<dbReference type="Gene3D" id="2.60.120.10">
    <property type="entry name" value="Jelly Rolls"/>
    <property type="match status" value="1"/>
</dbReference>
<dbReference type="HAMAP" id="MF_00334">
    <property type="entry name" value="Homogentis_dioxygen"/>
    <property type="match status" value="1"/>
</dbReference>
<dbReference type="InterPro" id="IPR046451">
    <property type="entry name" value="HgmA_C"/>
</dbReference>
<dbReference type="InterPro" id="IPR046452">
    <property type="entry name" value="HgmA_N"/>
</dbReference>
<dbReference type="InterPro" id="IPR005708">
    <property type="entry name" value="Homogentis_dOase"/>
</dbReference>
<dbReference type="InterPro" id="IPR022950">
    <property type="entry name" value="Homogentis_dOase_bac"/>
</dbReference>
<dbReference type="InterPro" id="IPR014710">
    <property type="entry name" value="RmlC-like_jellyroll"/>
</dbReference>
<dbReference type="InterPro" id="IPR011051">
    <property type="entry name" value="RmlC_Cupin_sf"/>
</dbReference>
<dbReference type="NCBIfam" id="TIGR01015">
    <property type="entry name" value="hmgA"/>
    <property type="match status" value="1"/>
</dbReference>
<dbReference type="PANTHER" id="PTHR11056">
    <property type="entry name" value="HOMOGENTISATE 1,2-DIOXYGENASE"/>
    <property type="match status" value="1"/>
</dbReference>
<dbReference type="PANTHER" id="PTHR11056:SF0">
    <property type="entry name" value="HOMOGENTISATE 1,2-DIOXYGENASE"/>
    <property type="match status" value="1"/>
</dbReference>
<dbReference type="Pfam" id="PF04209">
    <property type="entry name" value="HgmA_C"/>
    <property type="match status" value="1"/>
</dbReference>
<dbReference type="Pfam" id="PF20510">
    <property type="entry name" value="HgmA_N"/>
    <property type="match status" value="1"/>
</dbReference>
<dbReference type="SUPFAM" id="SSF51182">
    <property type="entry name" value="RmlC-like cupins"/>
    <property type="match status" value="1"/>
</dbReference>
<organism>
    <name type="scientific">Pseudomonas fluorescens (strain Pf0-1)</name>
    <dbReference type="NCBI Taxonomy" id="205922"/>
    <lineage>
        <taxon>Bacteria</taxon>
        <taxon>Pseudomonadati</taxon>
        <taxon>Pseudomonadota</taxon>
        <taxon>Gammaproteobacteria</taxon>
        <taxon>Pseudomonadales</taxon>
        <taxon>Pseudomonadaceae</taxon>
        <taxon>Pseudomonas</taxon>
    </lineage>
</organism>
<gene>
    <name evidence="1" type="primary">hmgA</name>
    <name type="ordered locus">Pfl01_0910</name>
</gene>
<evidence type="ECO:0000255" key="1">
    <source>
        <dbReference type="HAMAP-Rule" id="MF_00334"/>
    </source>
</evidence>
<protein>
    <recommendedName>
        <fullName evidence="1">Homogentisate 1,2-dioxygenase</fullName>
        <shortName evidence="1">HGDO</shortName>
        <ecNumber evidence="1">1.13.11.5</ecNumber>
    </recommendedName>
    <alternativeName>
        <fullName evidence="1">Homogentisate oxygenase</fullName>
    </alternativeName>
    <alternativeName>
        <fullName evidence="1">Homogentisic acid oxidase</fullName>
    </alternativeName>
    <alternativeName>
        <fullName evidence="1">Homogentisicase</fullName>
    </alternativeName>
</protein>
<sequence>MNLDSALAYQSGFGNEFSSEALPGALPVGQNSPQKAPYGLYTELFSGTAFTMTRSEARRTWMYRIQPSANHPAFVKLERQLAGGPLGEVTPNRLRWNPLDLPTEPTDFIDGLVSMAANSGADKPAGISIYHYGANRSMERVFFNADGELLLVPQLGRLRIATELGVLDVAPLEIAVLPRGLKFRVELLDPQARGYVAENHGAPLRLPDLGPIGSNGLANPRDFLTPVAAYENLQQPTTLVQKFLGQLWGTELNHSPLNVVAWHGNNVPYKYDLRRFNTIGTVSFDHPDPSIFTVLTSPTSVHGLANLDFVIFPPRWMVAENTFRPPWFHRNLMNEFMGLIQGEYDAKAEGFVPGGASLHSCMSAHGPDGETCTKAINADLKPAKIDNTMAFMFETSQVLRPSRFALDCPQLQSTYDACWATLPATFDPTRR</sequence>
<proteinExistence type="inferred from homology"/>
<accession>Q3KHV3</accession>
<comment type="function">
    <text evidence="1">Involved in the catabolism of homogentisate (2,5-dihydroxyphenylacetate or 2,5-OH-PhAc), a central intermediate in the degradation of phenylalanine and tyrosine. Catalyzes the oxidative ring cleavage of the aromatic ring of homogentisate to yield maleylacetoacetate.</text>
</comment>
<comment type="catalytic activity">
    <reaction evidence="1">
        <text>homogentisate + O2 = 4-maleylacetoacetate + H(+)</text>
        <dbReference type="Rhea" id="RHEA:15449"/>
        <dbReference type="ChEBI" id="CHEBI:15378"/>
        <dbReference type="ChEBI" id="CHEBI:15379"/>
        <dbReference type="ChEBI" id="CHEBI:16169"/>
        <dbReference type="ChEBI" id="CHEBI:17105"/>
        <dbReference type="EC" id="1.13.11.5"/>
    </reaction>
</comment>
<comment type="cofactor">
    <cofactor evidence="1">
        <name>Fe cation</name>
        <dbReference type="ChEBI" id="CHEBI:24875"/>
    </cofactor>
</comment>
<comment type="pathway">
    <text evidence="1">Amino-acid degradation; L-phenylalanine degradation; acetoacetate and fumarate from L-phenylalanine: step 4/6.</text>
</comment>
<comment type="subunit">
    <text evidence="1">Hexamer; dimer of trimers.</text>
</comment>
<comment type="similarity">
    <text evidence="1">Belongs to the homogentisate dioxygenase family.</text>
</comment>
<feature type="chain" id="PRO_0000225792" description="Homogentisate 1,2-dioxygenase">
    <location>
        <begin position="1"/>
        <end position="431"/>
    </location>
</feature>
<feature type="active site" description="Proton acceptor" evidence="1">
    <location>
        <position position="286"/>
    </location>
</feature>
<feature type="binding site" evidence="1">
    <location>
        <position position="329"/>
    </location>
    <ligand>
        <name>Fe cation</name>
        <dbReference type="ChEBI" id="CHEBI:24875"/>
    </ligand>
</feature>
<feature type="binding site" evidence="1">
    <location>
        <position position="335"/>
    </location>
    <ligand>
        <name>Fe cation</name>
        <dbReference type="ChEBI" id="CHEBI:24875"/>
    </ligand>
</feature>
<feature type="binding site" evidence="1">
    <location>
        <position position="344"/>
    </location>
    <ligand>
        <name>homogentisate</name>
        <dbReference type="ChEBI" id="CHEBI:16169"/>
    </ligand>
</feature>
<feature type="binding site" evidence="1">
    <location>
        <position position="365"/>
    </location>
    <ligand>
        <name>Fe cation</name>
        <dbReference type="ChEBI" id="CHEBI:24875"/>
    </ligand>
</feature>
<feature type="binding site" evidence="1">
    <location>
        <position position="365"/>
    </location>
    <ligand>
        <name>homogentisate</name>
        <dbReference type="ChEBI" id="CHEBI:16169"/>
    </ligand>
</feature>
<reference key="1">
    <citation type="journal article" date="2009" name="Genome Biol.">
        <title>Genomic and genetic analyses of diversity and plant interactions of Pseudomonas fluorescens.</title>
        <authorList>
            <person name="Silby M.W."/>
            <person name="Cerdeno-Tarraga A.M."/>
            <person name="Vernikos G.S."/>
            <person name="Giddens S.R."/>
            <person name="Jackson R.W."/>
            <person name="Preston G.M."/>
            <person name="Zhang X.-X."/>
            <person name="Moon C.D."/>
            <person name="Gehrig S.M."/>
            <person name="Godfrey S.A.C."/>
            <person name="Knight C.G."/>
            <person name="Malone J.G."/>
            <person name="Robinson Z."/>
            <person name="Spiers A.J."/>
            <person name="Harris S."/>
            <person name="Challis G.L."/>
            <person name="Yaxley A.M."/>
            <person name="Harris D."/>
            <person name="Seeger K."/>
            <person name="Murphy L."/>
            <person name="Rutter S."/>
            <person name="Squares R."/>
            <person name="Quail M.A."/>
            <person name="Saunders E."/>
            <person name="Mavromatis K."/>
            <person name="Brettin T.S."/>
            <person name="Bentley S.D."/>
            <person name="Hothersall J."/>
            <person name="Stephens E."/>
            <person name="Thomas C.M."/>
            <person name="Parkhill J."/>
            <person name="Levy S.B."/>
            <person name="Rainey P.B."/>
            <person name="Thomson N.R."/>
        </authorList>
    </citation>
    <scope>NUCLEOTIDE SEQUENCE [LARGE SCALE GENOMIC DNA]</scope>
    <source>
        <strain>Pf0-1</strain>
    </source>
</reference>